<organism>
    <name type="scientific">Oryza sativa subsp. japonica</name>
    <name type="common">Rice</name>
    <dbReference type="NCBI Taxonomy" id="39947"/>
    <lineage>
        <taxon>Eukaryota</taxon>
        <taxon>Viridiplantae</taxon>
        <taxon>Streptophyta</taxon>
        <taxon>Embryophyta</taxon>
        <taxon>Tracheophyta</taxon>
        <taxon>Spermatophyta</taxon>
        <taxon>Magnoliopsida</taxon>
        <taxon>Liliopsida</taxon>
        <taxon>Poales</taxon>
        <taxon>Poaceae</taxon>
        <taxon>BOP clade</taxon>
        <taxon>Oryzoideae</taxon>
        <taxon>Oryzeae</taxon>
        <taxon>Oryzinae</taxon>
        <taxon>Oryza</taxon>
        <taxon>Oryza sativa</taxon>
    </lineage>
</organism>
<comment type="similarity">
    <text evidence="2">Belongs to the thioredoxin family.</text>
</comment>
<comment type="caution">
    <text evidence="2">Lacks the conserved cysteine (here Ser-49), present in the redox-active center, which is one of the conserved features of the thioredoxin family.</text>
</comment>
<comment type="sequence caution" evidence="2">
    <conflict type="erroneous gene model prediction">
        <sequence resource="EMBL-CDS" id="CAE04254"/>
    </conflict>
    <text>The predicted gene has been split into 2 genes: Os04g0629400 and Os04g0629500.</text>
</comment>
<reference key="1">
    <citation type="journal article" date="2002" name="Nature">
        <title>Sequence and analysis of rice chromosome 4.</title>
        <authorList>
            <person name="Feng Q."/>
            <person name="Zhang Y."/>
            <person name="Hao P."/>
            <person name="Wang S."/>
            <person name="Fu G."/>
            <person name="Huang Y."/>
            <person name="Li Y."/>
            <person name="Zhu J."/>
            <person name="Liu Y."/>
            <person name="Hu X."/>
            <person name="Jia P."/>
            <person name="Zhang Y."/>
            <person name="Zhao Q."/>
            <person name="Ying K."/>
            <person name="Yu S."/>
            <person name="Tang Y."/>
            <person name="Weng Q."/>
            <person name="Zhang L."/>
            <person name="Lu Y."/>
            <person name="Mu J."/>
            <person name="Lu Y."/>
            <person name="Zhang L.S."/>
            <person name="Yu Z."/>
            <person name="Fan D."/>
            <person name="Liu X."/>
            <person name="Lu T."/>
            <person name="Li C."/>
            <person name="Wu Y."/>
            <person name="Sun T."/>
            <person name="Lei H."/>
            <person name="Li T."/>
            <person name="Hu H."/>
            <person name="Guan J."/>
            <person name="Wu M."/>
            <person name="Zhang R."/>
            <person name="Zhou B."/>
            <person name="Chen Z."/>
            <person name="Chen L."/>
            <person name="Jin Z."/>
            <person name="Wang R."/>
            <person name="Yin H."/>
            <person name="Cai Z."/>
            <person name="Ren S."/>
            <person name="Lv G."/>
            <person name="Gu W."/>
            <person name="Zhu G."/>
            <person name="Tu Y."/>
            <person name="Jia J."/>
            <person name="Zhang Y."/>
            <person name="Chen J."/>
            <person name="Kang H."/>
            <person name="Chen X."/>
            <person name="Shao C."/>
            <person name="Sun Y."/>
            <person name="Hu Q."/>
            <person name="Zhang X."/>
            <person name="Zhang W."/>
            <person name="Wang L."/>
            <person name="Ding C."/>
            <person name="Sheng H."/>
            <person name="Gu J."/>
            <person name="Chen S."/>
            <person name="Ni L."/>
            <person name="Zhu F."/>
            <person name="Chen W."/>
            <person name="Lan L."/>
            <person name="Lai Y."/>
            <person name="Cheng Z."/>
            <person name="Gu M."/>
            <person name="Jiang J."/>
            <person name="Li J."/>
            <person name="Hong G."/>
            <person name="Xue Y."/>
            <person name="Han B."/>
        </authorList>
    </citation>
    <scope>NUCLEOTIDE SEQUENCE [LARGE SCALE GENOMIC DNA]</scope>
    <source>
        <strain>cv. Nipponbare</strain>
    </source>
</reference>
<reference key="2">
    <citation type="journal article" date="2005" name="Nature">
        <title>The map-based sequence of the rice genome.</title>
        <authorList>
            <consortium name="International rice genome sequencing project (IRGSP)"/>
        </authorList>
    </citation>
    <scope>NUCLEOTIDE SEQUENCE [LARGE SCALE GENOMIC DNA]</scope>
    <source>
        <strain>cv. Nipponbare</strain>
    </source>
</reference>
<reference key="3">
    <citation type="journal article" date="2008" name="Nucleic Acids Res.">
        <title>The rice annotation project database (RAP-DB): 2008 update.</title>
        <authorList>
            <consortium name="The rice annotation project (RAP)"/>
        </authorList>
    </citation>
    <scope>GENOME REANNOTATION</scope>
    <source>
        <strain>cv. Nipponbare</strain>
    </source>
</reference>
<reference key="4">
    <citation type="journal article" date="2013" name="Rice">
        <title>Improvement of the Oryza sativa Nipponbare reference genome using next generation sequence and optical map data.</title>
        <authorList>
            <person name="Kawahara Y."/>
            <person name="de la Bastide M."/>
            <person name="Hamilton J.P."/>
            <person name="Kanamori H."/>
            <person name="McCombie W.R."/>
            <person name="Ouyang S."/>
            <person name="Schwartz D.C."/>
            <person name="Tanaka T."/>
            <person name="Wu J."/>
            <person name="Zhou S."/>
            <person name="Childs K.L."/>
            <person name="Davidson R.M."/>
            <person name="Lin H."/>
            <person name="Quesada-Ocampo L."/>
            <person name="Vaillancourt B."/>
            <person name="Sakai H."/>
            <person name="Lee S.S."/>
            <person name="Kim J."/>
            <person name="Numa H."/>
            <person name="Itoh T."/>
            <person name="Buell C.R."/>
            <person name="Matsumoto T."/>
        </authorList>
    </citation>
    <scope>GENOME REANNOTATION</scope>
    <source>
        <strain>cv. Nipponbare</strain>
    </source>
</reference>
<reference key="5">
    <citation type="journal article" date="2005" name="PLoS Biol.">
        <title>The genomes of Oryza sativa: a history of duplications.</title>
        <authorList>
            <person name="Yu J."/>
            <person name="Wang J."/>
            <person name="Lin W."/>
            <person name="Li S."/>
            <person name="Li H."/>
            <person name="Zhou J."/>
            <person name="Ni P."/>
            <person name="Dong W."/>
            <person name="Hu S."/>
            <person name="Zeng C."/>
            <person name="Zhang J."/>
            <person name="Zhang Y."/>
            <person name="Li R."/>
            <person name="Xu Z."/>
            <person name="Li S."/>
            <person name="Li X."/>
            <person name="Zheng H."/>
            <person name="Cong L."/>
            <person name="Lin L."/>
            <person name="Yin J."/>
            <person name="Geng J."/>
            <person name="Li G."/>
            <person name="Shi J."/>
            <person name="Liu J."/>
            <person name="Lv H."/>
            <person name="Li J."/>
            <person name="Wang J."/>
            <person name="Deng Y."/>
            <person name="Ran L."/>
            <person name="Shi X."/>
            <person name="Wang X."/>
            <person name="Wu Q."/>
            <person name="Li C."/>
            <person name="Ren X."/>
            <person name="Wang J."/>
            <person name="Wang X."/>
            <person name="Li D."/>
            <person name="Liu D."/>
            <person name="Zhang X."/>
            <person name="Ji Z."/>
            <person name="Zhao W."/>
            <person name="Sun Y."/>
            <person name="Zhang Z."/>
            <person name="Bao J."/>
            <person name="Han Y."/>
            <person name="Dong L."/>
            <person name="Ji J."/>
            <person name="Chen P."/>
            <person name="Wu S."/>
            <person name="Liu J."/>
            <person name="Xiao Y."/>
            <person name="Bu D."/>
            <person name="Tan J."/>
            <person name="Yang L."/>
            <person name="Ye C."/>
            <person name="Zhang J."/>
            <person name="Xu J."/>
            <person name="Zhou Y."/>
            <person name="Yu Y."/>
            <person name="Zhang B."/>
            <person name="Zhuang S."/>
            <person name="Wei H."/>
            <person name="Liu B."/>
            <person name="Lei M."/>
            <person name="Yu H."/>
            <person name="Li Y."/>
            <person name="Xu H."/>
            <person name="Wei S."/>
            <person name="He X."/>
            <person name="Fang L."/>
            <person name="Zhang Z."/>
            <person name="Zhang Y."/>
            <person name="Huang X."/>
            <person name="Su Z."/>
            <person name="Tong W."/>
            <person name="Li J."/>
            <person name="Tong Z."/>
            <person name="Li S."/>
            <person name="Ye J."/>
            <person name="Wang L."/>
            <person name="Fang L."/>
            <person name="Lei T."/>
            <person name="Chen C.-S."/>
            <person name="Chen H.-C."/>
            <person name="Xu Z."/>
            <person name="Li H."/>
            <person name="Huang H."/>
            <person name="Zhang F."/>
            <person name="Xu H."/>
            <person name="Li N."/>
            <person name="Zhao C."/>
            <person name="Li S."/>
            <person name="Dong L."/>
            <person name="Huang Y."/>
            <person name="Li L."/>
            <person name="Xi Y."/>
            <person name="Qi Q."/>
            <person name="Li W."/>
            <person name="Zhang B."/>
            <person name="Hu W."/>
            <person name="Zhang Y."/>
            <person name="Tian X."/>
            <person name="Jiao Y."/>
            <person name="Liang X."/>
            <person name="Jin J."/>
            <person name="Gao L."/>
            <person name="Zheng W."/>
            <person name="Hao B."/>
            <person name="Liu S.-M."/>
            <person name="Wang W."/>
            <person name="Yuan L."/>
            <person name="Cao M."/>
            <person name="McDermott J."/>
            <person name="Samudrala R."/>
            <person name="Wang J."/>
            <person name="Wong G.K.-S."/>
            <person name="Yang H."/>
        </authorList>
    </citation>
    <scope>NUCLEOTIDE SEQUENCE [LARGE SCALE GENOMIC DNA]</scope>
    <source>
        <strain>cv. Nipponbare</strain>
    </source>
</reference>
<reference key="6">
    <citation type="journal article" date="2003" name="Science">
        <title>Collection, mapping, and annotation of over 28,000 cDNA clones from japonica rice.</title>
        <authorList>
            <consortium name="The rice full-length cDNA consortium"/>
        </authorList>
    </citation>
    <scope>NUCLEOTIDE SEQUENCE [LARGE SCALE MRNA]</scope>
    <source>
        <strain>cv. Nipponbare</strain>
    </source>
</reference>
<reference key="7">
    <citation type="journal article" date="2009" name="Mol. Plant">
        <title>Comparative genomic study of the thioredoxin family in photosynthetic organisms with emphasis on Populus trichocarpa.</title>
        <authorList>
            <person name="Chibani K."/>
            <person name="Wingsle G."/>
            <person name="Jacquot J.P."/>
            <person name="Gelhaye E."/>
            <person name="Rouhier N."/>
        </authorList>
    </citation>
    <scope>GENE FAMILY</scope>
    <scope>NOMENCLATURE</scope>
</reference>
<protein>
    <recommendedName>
        <fullName>Thioredoxin-like protein CXXS1</fullName>
        <shortName>OsCXXS1</shortName>
    </recommendedName>
    <alternativeName>
        <fullName>OsTrx15</fullName>
    </alternativeName>
</protein>
<gene>
    <name type="ordered locus">Os04g0629500</name>
    <name type="ordered locus">LOC_Os04g53740</name>
    <name type="ORF">OsJ_16273</name>
    <name type="ORF">OSJNBa0089N06.15</name>
</gene>
<dbReference type="EMBL" id="AL662988">
    <property type="protein sequence ID" value="CAE04254.3"/>
    <property type="status" value="ALT_SEQ"/>
    <property type="molecule type" value="Genomic_DNA"/>
</dbReference>
<dbReference type="EMBL" id="AP008210">
    <property type="protein sequence ID" value="BAF15882.1"/>
    <property type="molecule type" value="Genomic_DNA"/>
</dbReference>
<dbReference type="EMBL" id="AP014960">
    <property type="protein sequence ID" value="BAS91154.1"/>
    <property type="molecule type" value="Genomic_DNA"/>
</dbReference>
<dbReference type="EMBL" id="CM000141">
    <property type="protein sequence ID" value="EAZ32083.1"/>
    <property type="molecule type" value="Genomic_DNA"/>
</dbReference>
<dbReference type="EMBL" id="AK072821">
    <property type="protein sequence ID" value="BAG93159.1"/>
    <property type="molecule type" value="mRNA"/>
</dbReference>
<dbReference type="EMBL" id="AK103985">
    <property type="protein sequence ID" value="BAG96358.1"/>
    <property type="molecule type" value="mRNA"/>
</dbReference>
<dbReference type="EMBL" id="AK121437">
    <property type="protein sequence ID" value="BAH00488.1"/>
    <property type="molecule type" value="mRNA"/>
</dbReference>
<dbReference type="RefSeq" id="XP_015635976.1">
    <property type="nucleotide sequence ID" value="XM_015780490.1"/>
</dbReference>
<dbReference type="SMR" id="Q0J9V5"/>
<dbReference type="FunCoup" id="Q0J9V5">
    <property type="interactions" value="40"/>
</dbReference>
<dbReference type="STRING" id="39947.Q0J9V5"/>
<dbReference type="PaxDb" id="39947-Q0J9V5"/>
<dbReference type="EnsemblPlants" id="Os04t0629500-01">
    <property type="protein sequence ID" value="Os04t0629500-01"/>
    <property type="gene ID" value="Os04g0629500"/>
</dbReference>
<dbReference type="EnsemblPlants" id="Os04t0629500-02">
    <property type="protein sequence ID" value="Os04t0629500-02"/>
    <property type="gene ID" value="Os04g0629500"/>
</dbReference>
<dbReference type="Gramene" id="Os04t0629500-01">
    <property type="protein sequence ID" value="Os04t0629500-01"/>
    <property type="gene ID" value="Os04g0629500"/>
</dbReference>
<dbReference type="Gramene" id="Os04t0629500-02">
    <property type="protein sequence ID" value="Os04t0629500-02"/>
    <property type="gene ID" value="Os04g0629500"/>
</dbReference>
<dbReference type="KEGG" id="dosa:Os04g0629500"/>
<dbReference type="eggNOG" id="KOG0907">
    <property type="taxonomic scope" value="Eukaryota"/>
</dbReference>
<dbReference type="HOGENOM" id="CLU_090389_14_1_1"/>
<dbReference type="InParanoid" id="Q0J9V5"/>
<dbReference type="OMA" id="WCIPSVF"/>
<dbReference type="OrthoDB" id="10263751at2759"/>
<dbReference type="Proteomes" id="UP000000763">
    <property type="component" value="Chromosome 4"/>
</dbReference>
<dbReference type="Proteomes" id="UP000007752">
    <property type="component" value="Chromosome 4"/>
</dbReference>
<dbReference type="Proteomes" id="UP000059680">
    <property type="component" value="Chromosome 4"/>
</dbReference>
<dbReference type="CDD" id="cd02947">
    <property type="entry name" value="TRX_family"/>
    <property type="match status" value="1"/>
</dbReference>
<dbReference type="Gene3D" id="3.40.30.10">
    <property type="entry name" value="Glutaredoxin"/>
    <property type="match status" value="1"/>
</dbReference>
<dbReference type="InterPro" id="IPR036249">
    <property type="entry name" value="Thioredoxin-like_sf"/>
</dbReference>
<dbReference type="InterPro" id="IPR013766">
    <property type="entry name" value="Thioredoxin_domain"/>
</dbReference>
<dbReference type="InterPro" id="IPR050620">
    <property type="entry name" value="Thioredoxin_H-type-like"/>
</dbReference>
<dbReference type="PANTHER" id="PTHR10438">
    <property type="entry name" value="THIOREDOXIN"/>
    <property type="match status" value="1"/>
</dbReference>
<dbReference type="PANTHER" id="PTHR10438:SF242">
    <property type="entry name" value="THIOREDOXIN-LIKE PROTEIN CXXS1"/>
    <property type="match status" value="1"/>
</dbReference>
<dbReference type="Pfam" id="PF00085">
    <property type="entry name" value="Thioredoxin"/>
    <property type="match status" value="1"/>
</dbReference>
<dbReference type="SUPFAM" id="SSF52833">
    <property type="entry name" value="Thioredoxin-like"/>
    <property type="match status" value="1"/>
</dbReference>
<dbReference type="PROSITE" id="PS51352">
    <property type="entry name" value="THIOREDOXIN_2"/>
    <property type="match status" value="1"/>
</dbReference>
<evidence type="ECO:0000255" key="1">
    <source>
        <dbReference type="PROSITE-ProRule" id="PRU00691"/>
    </source>
</evidence>
<evidence type="ECO:0000305" key="2"/>
<proteinExistence type="evidence at transcript level"/>
<accession>Q0J9V5</accession>
<accession>A0A0P0WFC1</accession>
<accession>Q7XN67</accession>
<feature type="chain" id="PRO_0000394848" description="Thioredoxin-like protein CXXS1">
    <location>
        <begin position="1"/>
        <end position="133"/>
    </location>
</feature>
<feature type="domain" description="Thioredoxin" evidence="1">
    <location>
        <begin position="1"/>
        <end position="120"/>
    </location>
</feature>
<name>CXXS1_ORYSJ</name>
<sequence>MEIQQQKGVGNSKVVKVEKEESWDLFVNQASNEGHPVVAHFGASWCVTSLSMNYKFEELAQTHPEILFLYVDVDDVQSVSSKLGVKAMPTFFLIKDKEVVNKIVGANPDEVKKMVDASAESFGVTAPPDIVVE</sequence>
<keyword id="KW-1185">Reference proteome</keyword>